<sequence>MSRVGKKLLEIPSGVTVTLNDNTVTVKGPKGELTRTFHPDMKIKIEDNVLTVERPSDNKEHRALHGTTRSIIGNMVEGVSKGFERGLELVGVGYRASKSGNKLVLNVGYSHPVEIVPENGIEIEVPSQTKVVVKGTDKERVGATAANIRAVRSPEPYKGKGIRYEGEMVRRKEGKSAK</sequence>
<reference key="1">
    <citation type="journal article" date="2004" name="J. Mol. Microbiol. Biotechnol.">
        <title>The complete genome sequence of Bacillus licheniformis DSM13, an organism with great industrial potential.</title>
        <authorList>
            <person name="Veith B."/>
            <person name="Herzberg C."/>
            <person name="Steckel S."/>
            <person name="Feesche J."/>
            <person name="Maurer K.H."/>
            <person name="Ehrenreich P."/>
            <person name="Baeumer S."/>
            <person name="Henne A."/>
            <person name="Liesegang H."/>
            <person name="Merkl R."/>
            <person name="Ehrenreich A."/>
            <person name="Gottschalk G."/>
        </authorList>
    </citation>
    <scope>NUCLEOTIDE SEQUENCE [LARGE SCALE GENOMIC DNA]</scope>
    <source>
        <strain>ATCC 14580 / DSM 13 / JCM 2505 / CCUG 7422 / NBRC 12200 / NCIMB 9375 / NCTC 10341 / NRRL NRS-1264 / Gibson 46</strain>
    </source>
</reference>
<reference key="2">
    <citation type="journal article" date="2004" name="Genome Biol.">
        <title>Complete genome sequence of the industrial bacterium Bacillus licheniformis and comparisons with closely related Bacillus species.</title>
        <authorList>
            <person name="Rey M.W."/>
            <person name="Ramaiya P."/>
            <person name="Nelson B.A."/>
            <person name="Brody-Karpin S.D."/>
            <person name="Zaretsky E.J."/>
            <person name="Tang M."/>
            <person name="Lopez de Leon A."/>
            <person name="Xiang H."/>
            <person name="Gusti V."/>
            <person name="Clausen I.G."/>
            <person name="Olsen P.B."/>
            <person name="Rasmussen M.D."/>
            <person name="Andersen J.T."/>
            <person name="Joergensen P.L."/>
            <person name="Larsen T.S."/>
            <person name="Sorokin A."/>
            <person name="Bolotin A."/>
            <person name="Lapidus A."/>
            <person name="Galleron N."/>
            <person name="Ehrlich S.D."/>
            <person name="Berka R.M."/>
        </authorList>
    </citation>
    <scope>NUCLEOTIDE SEQUENCE [LARGE SCALE GENOMIC DNA]</scope>
    <source>
        <strain>ATCC 14580 / DSM 13 / JCM 2505 / CCUG 7422 / NBRC 12200 / NCIMB 9375 / NCTC 10341 / NRRL NRS-1264 / Gibson 46</strain>
    </source>
</reference>
<keyword id="KW-1185">Reference proteome</keyword>
<keyword id="KW-0687">Ribonucleoprotein</keyword>
<keyword id="KW-0689">Ribosomal protein</keyword>
<keyword id="KW-0694">RNA-binding</keyword>
<keyword id="KW-0699">rRNA-binding</keyword>
<evidence type="ECO:0000255" key="1">
    <source>
        <dbReference type="HAMAP-Rule" id="MF_01365"/>
    </source>
</evidence>
<evidence type="ECO:0000305" key="2"/>
<accession>Q65P92</accession>
<accession>Q62ZN1</accession>
<feature type="chain" id="PRO_0000260843" description="Large ribosomal subunit protein uL6">
    <location>
        <begin position="1"/>
        <end position="178"/>
    </location>
</feature>
<protein>
    <recommendedName>
        <fullName evidence="1">Large ribosomal subunit protein uL6</fullName>
    </recommendedName>
    <alternativeName>
        <fullName evidence="2">50S ribosomal protein L6</fullName>
    </alternativeName>
</protein>
<gene>
    <name evidence="1" type="primary">rplF</name>
    <name type="ordered locus">BLi00148</name>
    <name type="ordered locus">BL01036</name>
</gene>
<comment type="function">
    <text evidence="1">This protein binds to the 23S rRNA, and is important in its secondary structure. It is located near the subunit interface in the base of the L7/L12 stalk, and near the tRNA binding site of the peptidyltransferase center.</text>
</comment>
<comment type="subunit">
    <text evidence="1">Part of the 50S ribosomal subunit.</text>
</comment>
<comment type="similarity">
    <text evidence="1">Belongs to the universal ribosomal protein uL6 family.</text>
</comment>
<dbReference type="EMBL" id="AE017333">
    <property type="protein sequence ID" value="AAU39122.1"/>
    <property type="molecule type" value="Genomic_DNA"/>
</dbReference>
<dbReference type="EMBL" id="CP000002">
    <property type="protein sequence ID" value="AAU21777.2"/>
    <property type="molecule type" value="Genomic_DNA"/>
</dbReference>
<dbReference type="RefSeq" id="WP_003178356.1">
    <property type="nucleotide sequence ID" value="NC_006322.1"/>
</dbReference>
<dbReference type="SMR" id="Q65P92"/>
<dbReference type="STRING" id="279010.BL01036"/>
<dbReference type="GeneID" id="92858888"/>
<dbReference type="KEGG" id="bld:BLi00148"/>
<dbReference type="KEGG" id="bli:BL01036"/>
<dbReference type="eggNOG" id="COG0097">
    <property type="taxonomic scope" value="Bacteria"/>
</dbReference>
<dbReference type="HOGENOM" id="CLU_065464_1_2_9"/>
<dbReference type="Proteomes" id="UP000000606">
    <property type="component" value="Chromosome"/>
</dbReference>
<dbReference type="GO" id="GO:0022625">
    <property type="term" value="C:cytosolic large ribosomal subunit"/>
    <property type="evidence" value="ECO:0007669"/>
    <property type="project" value="TreeGrafter"/>
</dbReference>
<dbReference type="GO" id="GO:0019843">
    <property type="term" value="F:rRNA binding"/>
    <property type="evidence" value="ECO:0007669"/>
    <property type="project" value="UniProtKB-UniRule"/>
</dbReference>
<dbReference type="GO" id="GO:0003735">
    <property type="term" value="F:structural constituent of ribosome"/>
    <property type="evidence" value="ECO:0007669"/>
    <property type="project" value="InterPro"/>
</dbReference>
<dbReference type="GO" id="GO:0002181">
    <property type="term" value="P:cytoplasmic translation"/>
    <property type="evidence" value="ECO:0007669"/>
    <property type="project" value="TreeGrafter"/>
</dbReference>
<dbReference type="FunFam" id="3.90.930.12:FF:000001">
    <property type="entry name" value="50S ribosomal protein L6"/>
    <property type="match status" value="1"/>
</dbReference>
<dbReference type="FunFam" id="3.90.930.12:FF:000002">
    <property type="entry name" value="50S ribosomal protein L6"/>
    <property type="match status" value="1"/>
</dbReference>
<dbReference type="Gene3D" id="3.90.930.12">
    <property type="entry name" value="Ribosomal protein L6, alpha-beta domain"/>
    <property type="match status" value="2"/>
</dbReference>
<dbReference type="HAMAP" id="MF_01365_B">
    <property type="entry name" value="Ribosomal_uL6_B"/>
    <property type="match status" value="1"/>
</dbReference>
<dbReference type="InterPro" id="IPR000702">
    <property type="entry name" value="Ribosomal_uL6-like"/>
</dbReference>
<dbReference type="InterPro" id="IPR036789">
    <property type="entry name" value="Ribosomal_uL6-like_a/b-dom_sf"/>
</dbReference>
<dbReference type="InterPro" id="IPR020040">
    <property type="entry name" value="Ribosomal_uL6_a/b-dom"/>
</dbReference>
<dbReference type="InterPro" id="IPR019906">
    <property type="entry name" value="Ribosomal_uL6_bac-type"/>
</dbReference>
<dbReference type="InterPro" id="IPR002358">
    <property type="entry name" value="Ribosomal_uL6_CS"/>
</dbReference>
<dbReference type="NCBIfam" id="TIGR03654">
    <property type="entry name" value="L6_bact"/>
    <property type="match status" value="1"/>
</dbReference>
<dbReference type="PANTHER" id="PTHR11655">
    <property type="entry name" value="60S/50S RIBOSOMAL PROTEIN L6/L9"/>
    <property type="match status" value="1"/>
</dbReference>
<dbReference type="PANTHER" id="PTHR11655:SF14">
    <property type="entry name" value="LARGE RIBOSOMAL SUBUNIT PROTEIN UL6M"/>
    <property type="match status" value="1"/>
</dbReference>
<dbReference type="Pfam" id="PF00347">
    <property type="entry name" value="Ribosomal_L6"/>
    <property type="match status" value="2"/>
</dbReference>
<dbReference type="PIRSF" id="PIRSF002162">
    <property type="entry name" value="Ribosomal_L6"/>
    <property type="match status" value="1"/>
</dbReference>
<dbReference type="PRINTS" id="PR00059">
    <property type="entry name" value="RIBOSOMALL6"/>
</dbReference>
<dbReference type="SUPFAM" id="SSF56053">
    <property type="entry name" value="Ribosomal protein L6"/>
    <property type="match status" value="2"/>
</dbReference>
<dbReference type="PROSITE" id="PS00525">
    <property type="entry name" value="RIBOSOMAL_L6_1"/>
    <property type="match status" value="1"/>
</dbReference>
<organism>
    <name type="scientific">Bacillus licheniformis (strain ATCC 14580 / DSM 13 / JCM 2505 / CCUG 7422 / NBRC 12200 / NCIMB 9375 / NCTC 10341 / NRRL NRS-1264 / Gibson 46)</name>
    <dbReference type="NCBI Taxonomy" id="279010"/>
    <lineage>
        <taxon>Bacteria</taxon>
        <taxon>Bacillati</taxon>
        <taxon>Bacillota</taxon>
        <taxon>Bacilli</taxon>
        <taxon>Bacillales</taxon>
        <taxon>Bacillaceae</taxon>
        <taxon>Bacillus</taxon>
    </lineage>
</organism>
<proteinExistence type="inferred from homology"/>
<name>RL6_BACLD</name>